<protein>
    <recommendedName>
        <fullName evidence="1">Protoheme IX farnesyltransferase 1</fullName>
        <ecNumber evidence="1">2.5.1.141</ecNumber>
    </recommendedName>
    <alternativeName>
        <fullName evidence="1">Heme B farnesyltransferase 1</fullName>
    </alternativeName>
    <alternativeName>
        <fullName evidence="1">Heme O synthase 1</fullName>
    </alternativeName>
</protein>
<gene>
    <name evidence="1" type="primary">ctaB1</name>
    <name type="ordered locus">Bsph_1395</name>
</gene>
<dbReference type="EC" id="2.5.1.141" evidence="1"/>
<dbReference type="EMBL" id="CP000817">
    <property type="protein sequence ID" value="ACA39003.1"/>
    <property type="molecule type" value="Genomic_DNA"/>
</dbReference>
<dbReference type="SMR" id="B1HPV1"/>
<dbReference type="EnsemblBacteria" id="ACA39003">
    <property type="protein sequence ID" value="ACA39003"/>
    <property type="gene ID" value="Bsph_1395"/>
</dbReference>
<dbReference type="KEGG" id="lsp:Bsph_1395"/>
<dbReference type="HOGENOM" id="CLU_029631_0_0_9"/>
<dbReference type="UniPathway" id="UPA00834">
    <property type="reaction ID" value="UER00712"/>
</dbReference>
<dbReference type="Proteomes" id="UP000002164">
    <property type="component" value="Chromosome"/>
</dbReference>
<dbReference type="GO" id="GO:0005886">
    <property type="term" value="C:plasma membrane"/>
    <property type="evidence" value="ECO:0007669"/>
    <property type="project" value="UniProtKB-SubCell"/>
</dbReference>
<dbReference type="GO" id="GO:0008495">
    <property type="term" value="F:protoheme IX farnesyltransferase activity"/>
    <property type="evidence" value="ECO:0007669"/>
    <property type="project" value="UniProtKB-UniRule"/>
</dbReference>
<dbReference type="GO" id="GO:0048034">
    <property type="term" value="P:heme O biosynthetic process"/>
    <property type="evidence" value="ECO:0007669"/>
    <property type="project" value="UniProtKB-UniRule"/>
</dbReference>
<dbReference type="CDD" id="cd13957">
    <property type="entry name" value="PT_UbiA_Cox10"/>
    <property type="match status" value="1"/>
</dbReference>
<dbReference type="FunFam" id="1.10.357.140:FF:000001">
    <property type="entry name" value="Protoheme IX farnesyltransferase"/>
    <property type="match status" value="1"/>
</dbReference>
<dbReference type="Gene3D" id="1.10.357.140">
    <property type="entry name" value="UbiA prenyltransferase"/>
    <property type="match status" value="1"/>
</dbReference>
<dbReference type="HAMAP" id="MF_00154">
    <property type="entry name" value="CyoE_CtaB"/>
    <property type="match status" value="1"/>
</dbReference>
<dbReference type="InterPro" id="IPR006369">
    <property type="entry name" value="Protohaem_IX_farnesylTrfase"/>
</dbReference>
<dbReference type="InterPro" id="IPR000537">
    <property type="entry name" value="UbiA_prenyltransferase"/>
</dbReference>
<dbReference type="InterPro" id="IPR030470">
    <property type="entry name" value="UbiA_prenylTrfase_CS"/>
</dbReference>
<dbReference type="InterPro" id="IPR044878">
    <property type="entry name" value="UbiA_sf"/>
</dbReference>
<dbReference type="NCBIfam" id="TIGR01473">
    <property type="entry name" value="cyoE_ctaB"/>
    <property type="match status" value="1"/>
</dbReference>
<dbReference type="PANTHER" id="PTHR43448">
    <property type="entry name" value="PROTOHEME IX FARNESYLTRANSFERASE, MITOCHONDRIAL"/>
    <property type="match status" value="1"/>
</dbReference>
<dbReference type="PANTHER" id="PTHR43448:SF2">
    <property type="entry name" value="PROTOHEME IX FARNESYLTRANSFERASE, MITOCHONDRIAL"/>
    <property type="match status" value="1"/>
</dbReference>
<dbReference type="Pfam" id="PF01040">
    <property type="entry name" value="UbiA"/>
    <property type="match status" value="1"/>
</dbReference>
<dbReference type="PROSITE" id="PS00943">
    <property type="entry name" value="UBIA"/>
    <property type="match status" value="1"/>
</dbReference>
<accession>B1HPV1</accession>
<proteinExistence type="inferred from homology"/>
<organism>
    <name type="scientific">Lysinibacillus sphaericus (strain C3-41)</name>
    <dbReference type="NCBI Taxonomy" id="444177"/>
    <lineage>
        <taxon>Bacteria</taxon>
        <taxon>Bacillati</taxon>
        <taxon>Bacillota</taxon>
        <taxon>Bacilli</taxon>
        <taxon>Bacillales</taxon>
        <taxon>Bacillaceae</taxon>
        <taxon>Lysinibacillus</taxon>
    </lineage>
</organism>
<reference key="1">
    <citation type="journal article" date="2008" name="J. Bacteriol.">
        <title>Complete genome sequence of the mosquitocidal bacterium Bacillus sphaericus C3-41 and comparison with those of closely related Bacillus species.</title>
        <authorList>
            <person name="Hu X."/>
            <person name="Fan W."/>
            <person name="Han B."/>
            <person name="Liu H."/>
            <person name="Zheng D."/>
            <person name="Li Q."/>
            <person name="Dong W."/>
            <person name="Yan J."/>
            <person name="Gao M."/>
            <person name="Berry C."/>
            <person name="Yuan Z."/>
        </authorList>
    </citation>
    <scope>NUCLEOTIDE SEQUENCE [LARGE SCALE GENOMIC DNA]</scope>
    <source>
        <strain>C3-41</strain>
    </source>
</reference>
<name>COXX1_LYSSC</name>
<feature type="chain" id="PRO_0000346055" description="Protoheme IX farnesyltransferase 1">
    <location>
        <begin position="1"/>
        <end position="305"/>
    </location>
</feature>
<feature type="transmembrane region" description="Helical" evidence="1">
    <location>
        <begin position="30"/>
        <end position="50"/>
    </location>
</feature>
<feature type="transmembrane region" description="Helical" evidence="1">
    <location>
        <begin position="59"/>
        <end position="79"/>
    </location>
</feature>
<feature type="transmembrane region" description="Helical" evidence="1">
    <location>
        <begin position="108"/>
        <end position="128"/>
    </location>
</feature>
<feature type="transmembrane region" description="Helical" evidence="1">
    <location>
        <begin position="129"/>
        <end position="149"/>
    </location>
</feature>
<feature type="transmembrane region" description="Helical" evidence="1">
    <location>
        <begin position="154"/>
        <end position="176"/>
    </location>
</feature>
<feature type="transmembrane region" description="Helical" evidence="1">
    <location>
        <begin position="180"/>
        <end position="202"/>
    </location>
</feature>
<feature type="transmembrane region" description="Helical" evidence="1">
    <location>
        <begin position="232"/>
        <end position="252"/>
    </location>
</feature>
<feature type="transmembrane region" description="Helical" evidence="1">
    <location>
        <begin position="253"/>
        <end position="273"/>
    </location>
</feature>
<feature type="transmembrane region" description="Helical" evidence="1">
    <location>
        <begin position="284"/>
        <end position="304"/>
    </location>
</feature>
<comment type="function">
    <text evidence="1">Converts heme B (protoheme IX) to heme O by substitution of the vinyl group on carbon 2 of heme B porphyrin ring with a hydroxyethyl farnesyl side group.</text>
</comment>
<comment type="catalytic activity">
    <reaction evidence="1">
        <text>heme b + (2E,6E)-farnesyl diphosphate + H2O = Fe(II)-heme o + diphosphate</text>
        <dbReference type="Rhea" id="RHEA:28070"/>
        <dbReference type="ChEBI" id="CHEBI:15377"/>
        <dbReference type="ChEBI" id="CHEBI:33019"/>
        <dbReference type="ChEBI" id="CHEBI:60344"/>
        <dbReference type="ChEBI" id="CHEBI:60530"/>
        <dbReference type="ChEBI" id="CHEBI:175763"/>
        <dbReference type="EC" id="2.5.1.141"/>
    </reaction>
</comment>
<comment type="pathway">
    <text evidence="1">Porphyrin-containing compound metabolism; heme O biosynthesis; heme O from protoheme: step 1/1.</text>
</comment>
<comment type="subunit">
    <text evidence="1">Interacts with CtaA.</text>
</comment>
<comment type="subcellular location">
    <subcellularLocation>
        <location evidence="1">Cell membrane</location>
        <topology evidence="1">Multi-pass membrane protein</topology>
    </subcellularLocation>
</comment>
<comment type="miscellaneous">
    <text evidence="1">Carbon 2 of the heme B porphyrin ring is defined according to the Fischer nomenclature.</text>
</comment>
<comment type="similarity">
    <text evidence="1">Belongs to the UbiA prenyltransferase family. Protoheme IX farnesyltransferase subfamily.</text>
</comment>
<sequence length="305" mass="33669">MSNGRTLAATRNTGPETTSVVKDFLALIKIGIVNSNLVTTFTGMWLAFQFTSRHFLQELDVILFTMLGAALIIGGSGAMNNFIDQDIDPIMKRTKARPTVTGRFKPNFVLTIALSFLIVGEILLFAASFAAGMWGLAGIFAYVVLYSMWSKRKHVSNTVVGSISGAIPPIIGFAAVEPALGPGALALFLIMFAWQPPHFYALAMKRTEEYRAAKIPMLPVVKGFKRTKYSMLFWILLLLPLPFLLPELGIGFLTLATALNLGWLILALKGFTAKDDMKWANRMFIYSLNHMTILFVSIIIFAVFS</sequence>
<keyword id="KW-1003">Cell membrane</keyword>
<keyword id="KW-0350">Heme biosynthesis</keyword>
<keyword id="KW-0472">Membrane</keyword>
<keyword id="KW-0808">Transferase</keyword>
<keyword id="KW-0812">Transmembrane</keyword>
<keyword id="KW-1133">Transmembrane helix</keyword>
<evidence type="ECO:0000255" key="1">
    <source>
        <dbReference type="HAMAP-Rule" id="MF_00154"/>
    </source>
</evidence>